<proteinExistence type="inferred from homology"/>
<name>GUAC_STRE4</name>
<feature type="chain" id="PRO_1000185055" description="GMP reductase">
    <location>
        <begin position="1"/>
        <end position="327"/>
    </location>
</feature>
<feature type="active site" description="Thioimidate intermediate" evidence="1">
    <location>
        <position position="176"/>
    </location>
</feature>
<feature type="binding site" evidence="1">
    <location>
        <begin position="205"/>
        <end position="228"/>
    </location>
    <ligand>
        <name>NADP(+)</name>
        <dbReference type="ChEBI" id="CHEBI:58349"/>
    </ligand>
</feature>
<keyword id="KW-0521">NADP</keyword>
<keyword id="KW-0560">Oxidoreductase</keyword>
<comment type="function">
    <text evidence="1">Catalyzes the irreversible NADPH-dependent deamination of GMP to IMP. It functions in the conversion of nucleobase, nucleoside and nucleotide derivatives of G to A nucleotides, and in maintaining the intracellular balance of A and G nucleotides.</text>
</comment>
<comment type="catalytic activity">
    <reaction evidence="1">
        <text>IMP + NH4(+) + NADP(+) = GMP + NADPH + 2 H(+)</text>
        <dbReference type="Rhea" id="RHEA:17185"/>
        <dbReference type="ChEBI" id="CHEBI:15378"/>
        <dbReference type="ChEBI" id="CHEBI:28938"/>
        <dbReference type="ChEBI" id="CHEBI:57783"/>
        <dbReference type="ChEBI" id="CHEBI:58053"/>
        <dbReference type="ChEBI" id="CHEBI:58115"/>
        <dbReference type="ChEBI" id="CHEBI:58349"/>
        <dbReference type="EC" id="1.7.1.7"/>
    </reaction>
</comment>
<comment type="similarity">
    <text evidence="1">Belongs to the IMPDH/GMPR family. GuaC type 2 subfamily.</text>
</comment>
<evidence type="ECO:0000255" key="1">
    <source>
        <dbReference type="HAMAP-Rule" id="MF_01511"/>
    </source>
</evidence>
<gene>
    <name evidence="1" type="primary">guaC</name>
    <name type="ordered locus">SEQ_1153</name>
</gene>
<organism>
    <name type="scientific">Streptococcus equi subsp. equi (strain 4047)</name>
    <dbReference type="NCBI Taxonomy" id="553482"/>
    <lineage>
        <taxon>Bacteria</taxon>
        <taxon>Bacillati</taxon>
        <taxon>Bacillota</taxon>
        <taxon>Bacilli</taxon>
        <taxon>Lactobacillales</taxon>
        <taxon>Streptococcaceae</taxon>
        <taxon>Streptococcus</taxon>
    </lineage>
</organism>
<dbReference type="EC" id="1.7.1.7" evidence="1"/>
<dbReference type="EMBL" id="FM204883">
    <property type="protein sequence ID" value="CAW93839.1"/>
    <property type="molecule type" value="Genomic_DNA"/>
</dbReference>
<dbReference type="RefSeq" id="WP_012679550.1">
    <property type="nucleotide sequence ID" value="NC_012471.1"/>
</dbReference>
<dbReference type="SMR" id="C0MAM1"/>
<dbReference type="GeneID" id="83704939"/>
<dbReference type="KEGG" id="seu:SEQ_1153"/>
<dbReference type="HOGENOM" id="CLU_022552_5_0_9"/>
<dbReference type="OrthoDB" id="9805398at2"/>
<dbReference type="Proteomes" id="UP000001365">
    <property type="component" value="Chromosome"/>
</dbReference>
<dbReference type="GO" id="GO:0005829">
    <property type="term" value="C:cytosol"/>
    <property type="evidence" value="ECO:0007669"/>
    <property type="project" value="TreeGrafter"/>
</dbReference>
<dbReference type="GO" id="GO:1902560">
    <property type="term" value="C:GMP reductase complex"/>
    <property type="evidence" value="ECO:0007669"/>
    <property type="project" value="InterPro"/>
</dbReference>
<dbReference type="GO" id="GO:0003920">
    <property type="term" value="F:GMP reductase activity"/>
    <property type="evidence" value="ECO:0007669"/>
    <property type="project" value="UniProtKB-UniRule"/>
</dbReference>
<dbReference type="GO" id="GO:0006163">
    <property type="term" value="P:purine nucleotide metabolic process"/>
    <property type="evidence" value="ECO:0007669"/>
    <property type="project" value="UniProtKB-UniRule"/>
</dbReference>
<dbReference type="CDD" id="cd00381">
    <property type="entry name" value="IMPDH"/>
    <property type="match status" value="1"/>
</dbReference>
<dbReference type="FunFam" id="3.20.20.70:FF:000424">
    <property type="entry name" value="Inosine-5'-monophosphate dehydrogenase 2"/>
    <property type="match status" value="1"/>
</dbReference>
<dbReference type="Gene3D" id="3.20.20.70">
    <property type="entry name" value="Aldolase class I"/>
    <property type="match status" value="1"/>
</dbReference>
<dbReference type="HAMAP" id="MF_01511">
    <property type="entry name" value="GMP_reduct_type2"/>
    <property type="match status" value="1"/>
</dbReference>
<dbReference type="InterPro" id="IPR013785">
    <property type="entry name" value="Aldolase_TIM"/>
</dbReference>
<dbReference type="InterPro" id="IPR050139">
    <property type="entry name" value="GMP_reductase"/>
</dbReference>
<dbReference type="InterPro" id="IPR005994">
    <property type="entry name" value="GuaC_type_2"/>
</dbReference>
<dbReference type="InterPro" id="IPR015875">
    <property type="entry name" value="IMP_DH/GMP_Rdtase_CS"/>
</dbReference>
<dbReference type="InterPro" id="IPR001093">
    <property type="entry name" value="IMP_DH_GMPRt"/>
</dbReference>
<dbReference type="NCBIfam" id="TIGR01306">
    <property type="entry name" value="GMP_reduct_2"/>
    <property type="match status" value="1"/>
</dbReference>
<dbReference type="NCBIfam" id="NF003966">
    <property type="entry name" value="PRK05458.1"/>
    <property type="match status" value="1"/>
</dbReference>
<dbReference type="PANTHER" id="PTHR43170">
    <property type="entry name" value="GMP REDUCTASE"/>
    <property type="match status" value="1"/>
</dbReference>
<dbReference type="PANTHER" id="PTHR43170:SF5">
    <property type="entry name" value="GMP REDUCTASE"/>
    <property type="match status" value="1"/>
</dbReference>
<dbReference type="Pfam" id="PF00478">
    <property type="entry name" value="IMPDH"/>
    <property type="match status" value="1"/>
</dbReference>
<dbReference type="PIRSF" id="PIRSF036500">
    <property type="entry name" value="GMP_red_Firmic"/>
    <property type="match status" value="1"/>
</dbReference>
<dbReference type="SMART" id="SM01240">
    <property type="entry name" value="IMPDH"/>
    <property type="match status" value="1"/>
</dbReference>
<dbReference type="SUPFAM" id="SSF51412">
    <property type="entry name" value="Inosine monophosphate dehydrogenase (IMPDH)"/>
    <property type="match status" value="1"/>
</dbReference>
<dbReference type="PROSITE" id="PS00487">
    <property type="entry name" value="IMP_DH_GMP_RED"/>
    <property type="match status" value="1"/>
</dbReference>
<accession>C0MAM1</accession>
<sequence>MFNDMPVFDYEDIQLIPNKCIINSRSEADTSVRLGNYTFKLPVIPANMQTIIDETIAEQLARDGYFYIMHRFDEEGRKPFIQRMHEQQLIASISVGVKDYEYDFVSSLKEDAPEFITIDIAHGHADSVIKMIKHIKAELPETFVIAGNVGTPEAVRELENAGADATKVGIGPGKVCITKVKTGFGTGGWQLAAVRWCAKAARKPIIADGGIRTHGDIAKSIRFGATMVMIGSLFAGHIESPGKMVEIDGQSFKEYYGSASEYQKGEHKNVEGKKILLPTKGHLADTLTEMKQDLQSSISYAGGRDLESLRRVNYVIVKNSIWNGDSI</sequence>
<reference key="1">
    <citation type="journal article" date="2009" name="PLoS Pathog.">
        <title>Genomic evidence for the evolution of Streptococcus equi: host restriction, increased virulence, and genetic exchange with human pathogens.</title>
        <authorList>
            <person name="Holden M.T.G."/>
            <person name="Heather Z."/>
            <person name="Paillot R."/>
            <person name="Steward K.F."/>
            <person name="Webb K."/>
            <person name="Ainslie F."/>
            <person name="Jourdan T."/>
            <person name="Bason N.C."/>
            <person name="Holroyd N.E."/>
            <person name="Mungall K."/>
            <person name="Quail M.A."/>
            <person name="Sanders M."/>
            <person name="Simmonds M."/>
            <person name="Willey D."/>
            <person name="Brooks K."/>
            <person name="Aanensen D.M."/>
            <person name="Spratt B.G."/>
            <person name="Jolley K.A."/>
            <person name="Maiden M.C.J."/>
            <person name="Kehoe M."/>
            <person name="Chanter N."/>
            <person name="Bentley S.D."/>
            <person name="Robinson C."/>
            <person name="Maskell D.J."/>
            <person name="Parkhill J."/>
            <person name="Waller A.S."/>
        </authorList>
    </citation>
    <scope>NUCLEOTIDE SEQUENCE [LARGE SCALE GENOMIC DNA]</scope>
    <source>
        <strain>4047</strain>
    </source>
</reference>
<protein>
    <recommendedName>
        <fullName evidence="1">GMP reductase</fullName>
        <ecNumber evidence="1">1.7.1.7</ecNumber>
    </recommendedName>
    <alternativeName>
        <fullName evidence="1">Guanosine 5'-monophosphate oxidoreductase</fullName>
        <shortName evidence="1">Guanosine monophosphate reductase</shortName>
    </alternativeName>
</protein>